<feature type="chain" id="PRO_1000101071" description="Large ribosomal subunit protein bL36">
    <location>
        <begin position="1"/>
        <end position="38"/>
    </location>
</feature>
<keyword id="KW-0687">Ribonucleoprotein</keyword>
<keyword id="KW-0689">Ribosomal protein</keyword>
<sequence length="38" mass="4451">MKVRPSVKPICEYCKVIRRNGRVMVICPTNPKHKQRQG</sequence>
<gene>
    <name evidence="1" type="primary">rpmJ</name>
    <name type="ordered locus">Sez_0079</name>
</gene>
<protein>
    <recommendedName>
        <fullName evidence="1">Large ribosomal subunit protein bL36</fullName>
    </recommendedName>
    <alternativeName>
        <fullName evidence="2">50S ribosomal protein L36</fullName>
    </alternativeName>
</protein>
<proteinExistence type="inferred from homology"/>
<dbReference type="EMBL" id="CP001129">
    <property type="protein sequence ID" value="ACG61462.1"/>
    <property type="molecule type" value="Genomic_DNA"/>
</dbReference>
<dbReference type="RefSeq" id="WP_000868345.1">
    <property type="nucleotide sequence ID" value="NC_011134.1"/>
</dbReference>
<dbReference type="SMR" id="B4U523"/>
<dbReference type="GeneID" id="93860206"/>
<dbReference type="KEGG" id="sez:Sez_0079"/>
<dbReference type="HOGENOM" id="CLU_135723_6_2_9"/>
<dbReference type="Proteomes" id="UP000001873">
    <property type="component" value="Chromosome"/>
</dbReference>
<dbReference type="GO" id="GO:0005737">
    <property type="term" value="C:cytoplasm"/>
    <property type="evidence" value="ECO:0007669"/>
    <property type="project" value="UniProtKB-ARBA"/>
</dbReference>
<dbReference type="GO" id="GO:1990904">
    <property type="term" value="C:ribonucleoprotein complex"/>
    <property type="evidence" value="ECO:0007669"/>
    <property type="project" value="UniProtKB-KW"/>
</dbReference>
<dbReference type="GO" id="GO:0005840">
    <property type="term" value="C:ribosome"/>
    <property type="evidence" value="ECO:0007669"/>
    <property type="project" value="UniProtKB-KW"/>
</dbReference>
<dbReference type="GO" id="GO:0003735">
    <property type="term" value="F:structural constituent of ribosome"/>
    <property type="evidence" value="ECO:0007669"/>
    <property type="project" value="InterPro"/>
</dbReference>
<dbReference type="GO" id="GO:0006412">
    <property type="term" value="P:translation"/>
    <property type="evidence" value="ECO:0007669"/>
    <property type="project" value="UniProtKB-UniRule"/>
</dbReference>
<dbReference type="HAMAP" id="MF_00251">
    <property type="entry name" value="Ribosomal_bL36"/>
    <property type="match status" value="1"/>
</dbReference>
<dbReference type="InterPro" id="IPR000473">
    <property type="entry name" value="Ribosomal_bL36"/>
</dbReference>
<dbReference type="InterPro" id="IPR035977">
    <property type="entry name" value="Ribosomal_bL36_sp"/>
</dbReference>
<dbReference type="NCBIfam" id="TIGR01022">
    <property type="entry name" value="rpmJ_bact"/>
    <property type="match status" value="1"/>
</dbReference>
<dbReference type="PANTHER" id="PTHR42888">
    <property type="entry name" value="50S RIBOSOMAL PROTEIN L36, CHLOROPLASTIC"/>
    <property type="match status" value="1"/>
</dbReference>
<dbReference type="PANTHER" id="PTHR42888:SF1">
    <property type="entry name" value="LARGE RIBOSOMAL SUBUNIT PROTEIN BL36C"/>
    <property type="match status" value="1"/>
</dbReference>
<dbReference type="Pfam" id="PF00444">
    <property type="entry name" value="Ribosomal_L36"/>
    <property type="match status" value="1"/>
</dbReference>
<dbReference type="SUPFAM" id="SSF57840">
    <property type="entry name" value="Ribosomal protein L36"/>
    <property type="match status" value="1"/>
</dbReference>
<dbReference type="PROSITE" id="PS00828">
    <property type="entry name" value="RIBOSOMAL_L36"/>
    <property type="match status" value="1"/>
</dbReference>
<organism>
    <name type="scientific">Streptococcus equi subsp. zooepidemicus (strain MGCS10565)</name>
    <dbReference type="NCBI Taxonomy" id="552526"/>
    <lineage>
        <taxon>Bacteria</taxon>
        <taxon>Bacillati</taxon>
        <taxon>Bacillota</taxon>
        <taxon>Bacilli</taxon>
        <taxon>Lactobacillales</taxon>
        <taxon>Streptococcaceae</taxon>
        <taxon>Streptococcus</taxon>
    </lineage>
</organism>
<comment type="similarity">
    <text evidence="1">Belongs to the bacterial ribosomal protein bL36 family.</text>
</comment>
<accession>B4U523</accession>
<name>RL36_STREM</name>
<evidence type="ECO:0000255" key="1">
    <source>
        <dbReference type="HAMAP-Rule" id="MF_00251"/>
    </source>
</evidence>
<evidence type="ECO:0000305" key="2"/>
<reference key="1">
    <citation type="journal article" date="2008" name="PLoS ONE">
        <title>Genome sequence of a lancefield group C Streptococcus zooepidemicus strain causing epidemic nephritis: new information about an old disease.</title>
        <authorList>
            <person name="Beres S.B."/>
            <person name="Sesso R."/>
            <person name="Pinto S.W.L."/>
            <person name="Hoe N.P."/>
            <person name="Porcella S.F."/>
            <person name="Deleo F.R."/>
            <person name="Musser J.M."/>
        </authorList>
    </citation>
    <scope>NUCLEOTIDE SEQUENCE [LARGE SCALE GENOMIC DNA]</scope>
    <source>
        <strain>MGCS10565</strain>
    </source>
</reference>